<sequence>MATELRCPDSMPCHNQQVNSASTQNPEPQQAGDLILAHAGGNSDSAATLTLLSGHAHSSVPAELDPQASGGATFNSENNGGTGNYDAPASDSLLGDCEISRQIGAQLKLLPMNDQIRELQTIIRDKTASRGDFMFSADRLIRLVVEEGLNQLPYEECMVTTPTGFKYEGVKFEKGNCGVSIMRSGEAMEQGLRDCCRSIRIGKILIQSDEETQRAKVYYAKFPPDIYRRKVLLMYPILSTGNTVIEAVKVLIEHGVQPSVIILLSLFSTPHGAKSIIQEFPEITILTTEVHPVAPTHFGQKYFGTD</sequence>
<proteinExistence type="evidence at transcript level"/>
<evidence type="ECO:0000250" key="1"/>
<evidence type="ECO:0000250" key="2">
    <source>
        <dbReference type="UniProtKB" id="Q26998"/>
    </source>
</evidence>
<evidence type="ECO:0000256" key="3">
    <source>
        <dbReference type="SAM" id="MobiDB-lite"/>
    </source>
</evidence>
<evidence type="ECO:0000305" key="4"/>
<comment type="subcellular location">
    <subcellularLocation>
        <location evidence="1">Cytoplasm</location>
    </subcellularLocation>
    <subcellularLocation>
        <location evidence="1">Nucleus</location>
    </subcellularLocation>
</comment>
<comment type="similarity">
    <text evidence="4">Belongs to the UPRTase family.</text>
</comment>
<comment type="caution">
    <text evidence="4">The uracil binding region known from UPRTases is missing.</text>
</comment>
<feature type="chain" id="PRO_0000254534" description="Uracil phosphoribosyltransferase homolog">
    <location>
        <begin position="1"/>
        <end position="306"/>
    </location>
</feature>
<feature type="region of interest" description="Disordered" evidence="3">
    <location>
        <begin position="1"/>
        <end position="28"/>
    </location>
</feature>
<feature type="region of interest" description="Disordered" evidence="3">
    <location>
        <begin position="58"/>
        <end position="87"/>
    </location>
</feature>
<feature type="compositionally biased region" description="Polar residues" evidence="3">
    <location>
        <begin position="13"/>
        <end position="28"/>
    </location>
</feature>
<feature type="compositionally biased region" description="Polar residues" evidence="3">
    <location>
        <begin position="70"/>
        <end position="79"/>
    </location>
</feature>
<feature type="binding site" evidence="2">
    <location>
        <position position="130"/>
    </location>
    <ligand>
        <name>GTP</name>
        <dbReference type="ChEBI" id="CHEBI:37565"/>
    </ligand>
</feature>
<feature type="binding site" evidence="2">
    <location>
        <position position="139"/>
    </location>
    <ligand>
        <name>GTP</name>
        <dbReference type="ChEBI" id="CHEBI:37565"/>
    </ligand>
</feature>
<feature type="binding site" evidence="2">
    <location>
        <begin position="173"/>
        <end position="176"/>
    </location>
    <ligand>
        <name>GTP</name>
        <dbReference type="ChEBI" id="CHEBI:37565"/>
    </ligand>
</feature>
<feature type="binding site" evidence="2">
    <location>
        <position position="183"/>
    </location>
    <ligand>
        <name>5-phospho-alpha-D-ribose 1-diphosphate</name>
        <dbReference type="ChEBI" id="CHEBI:58017"/>
    </ligand>
</feature>
<feature type="binding site" evidence="2">
    <location>
        <position position="200"/>
    </location>
    <ligand>
        <name>GTP</name>
        <dbReference type="ChEBI" id="CHEBI:37565"/>
    </ligand>
</feature>
<feature type="binding site" evidence="2">
    <location>
        <position position="229"/>
    </location>
    <ligand>
        <name>GTP</name>
        <dbReference type="ChEBI" id="CHEBI:37565"/>
    </ligand>
</feature>
<feature type="binding site" evidence="2">
    <location>
        <begin position="235"/>
        <end position="243"/>
    </location>
    <ligand>
        <name>5-phospho-alpha-D-ribose 1-diphosphate</name>
        <dbReference type="ChEBI" id="CHEBI:58017"/>
    </ligand>
</feature>
<feature type="binding site" evidence="2">
    <location>
        <begin position="296"/>
        <end position="298"/>
    </location>
    <ligand>
        <name>uracil</name>
        <dbReference type="ChEBI" id="CHEBI:17568"/>
    </ligand>
</feature>
<name>UPP_BOVIN</name>
<keyword id="KW-0963">Cytoplasm</keyword>
<keyword id="KW-0342">GTP-binding</keyword>
<keyword id="KW-0547">Nucleotide-binding</keyword>
<keyword id="KW-0539">Nucleus</keyword>
<keyword id="KW-1185">Reference proteome</keyword>
<organism>
    <name type="scientific">Bos taurus</name>
    <name type="common">Bovine</name>
    <dbReference type="NCBI Taxonomy" id="9913"/>
    <lineage>
        <taxon>Eukaryota</taxon>
        <taxon>Metazoa</taxon>
        <taxon>Chordata</taxon>
        <taxon>Craniata</taxon>
        <taxon>Vertebrata</taxon>
        <taxon>Euteleostomi</taxon>
        <taxon>Mammalia</taxon>
        <taxon>Eutheria</taxon>
        <taxon>Laurasiatheria</taxon>
        <taxon>Artiodactyla</taxon>
        <taxon>Ruminantia</taxon>
        <taxon>Pecora</taxon>
        <taxon>Bovidae</taxon>
        <taxon>Bovinae</taxon>
        <taxon>Bos</taxon>
    </lineage>
</organism>
<dbReference type="EMBL" id="BC109679">
    <property type="protein sequence ID" value="AAI09680.1"/>
    <property type="molecule type" value="mRNA"/>
</dbReference>
<dbReference type="RefSeq" id="NP_001069713.1">
    <property type="nucleotide sequence ID" value="NM_001076245.2"/>
</dbReference>
<dbReference type="SMR" id="Q32LA4"/>
<dbReference type="BioGRID" id="197418">
    <property type="interactions" value="1"/>
</dbReference>
<dbReference type="FunCoup" id="Q32LA4">
    <property type="interactions" value="925"/>
</dbReference>
<dbReference type="STRING" id="9913.ENSBTAP00000005978"/>
<dbReference type="PaxDb" id="9913-ENSBTAP00000005978"/>
<dbReference type="GeneID" id="540851"/>
<dbReference type="KEGG" id="bta:540851"/>
<dbReference type="CTD" id="139596"/>
<dbReference type="eggNOG" id="KOG1017">
    <property type="taxonomic scope" value="Eukaryota"/>
</dbReference>
<dbReference type="InParanoid" id="Q32LA4"/>
<dbReference type="OrthoDB" id="106623at2759"/>
<dbReference type="Proteomes" id="UP000009136">
    <property type="component" value="Unplaced"/>
</dbReference>
<dbReference type="GO" id="GO:0005737">
    <property type="term" value="C:cytoplasm"/>
    <property type="evidence" value="ECO:0000318"/>
    <property type="project" value="GO_Central"/>
</dbReference>
<dbReference type="GO" id="GO:0005634">
    <property type="term" value="C:nucleus"/>
    <property type="evidence" value="ECO:0007669"/>
    <property type="project" value="UniProtKB-SubCell"/>
</dbReference>
<dbReference type="GO" id="GO:0005525">
    <property type="term" value="F:GTP binding"/>
    <property type="evidence" value="ECO:0007669"/>
    <property type="project" value="UniProtKB-KW"/>
</dbReference>
<dbReference type="GO" id="GO:0050262">
    <property type="term" value="F:ribosylnicotinamide kinase activity"/>
    <property type="evidence" value="ECO:0000318"/>
    <property type="project" value="GO_Central"/>
</dbReference>
<dbReference type="GO" id="GO:0061769">
    <property type="term" value="F:ribosylnicotinate kinase activity"/>
    <property type="evidence" value="ECO:0000318"/>
    <property type="project" value="GO_Central"/>
</dbReference>
<dbReference type="CDD" id="cd06223">
    <property type="entry name" value="PRTases_typeI"/>
    <property type="match status" value="1"/>
</dbReference>
<dbReference type="FunFam" id="3.40.50.2020:FF:000026">
    <property type="entry name" value="Uracil phosphoribosyltransferase homolog"/>
    <property type="match status" value="1"/>
</dbReference>
<dbReference type="Gene3D" id="3.40.50.2020">
    <property type="match status" value="1"/>
</dbReference>
<dbReference type="InterPro" id="IPR000836">
    <property type="entry name" value="PRibTrfase_dom"/>
</dbReference>
<dbReference type="InterPro" id="IPR029057">
    <property type="entry name" value="PRTase-like"/>
</dbReference>
<dbReference type="Pfam" id="PF14681">
    <property type="entry name" value="UPRTase"/>
    <property type="match status" value="1"/>
</dbReference>
<dbReference type="SUPFAM" id="SSF53271">
    <property type="entry name" value="PRTase-like"/>
    <property type="match status" value="1"/>
</dbReference>
<accession>Q32LA4</accession>
<reference key="1">
    <citation type="submission" date="2005-11" db="EMBL/GenBank/DDBJ databases">
        <authorList>
            <consortium name="NIH - Mammalian Gene Collection (MGC) project"/>
        </authorList>
    </citation>
    <scope>NUCLEOTIDE SEQUENCE [LARGE SCALE MRNA]</scope>
    <source>
        <strain>Crossbred X Angus</strain>
        <tissue>Liver</tissue>
    </source>
</reference>
<protein>
    <recommendedName>
        <fullName>Uracil phosphoribosyltransferase homolog</fullName>
    </recommendedName>
</protein>
<gene>
    <name type="primary">UPRT</name>
</gene>